<comment type="function">
    <text evidence="2 8">Catalyzes the sterospecific oxidation of primary alcohols to the corresponding aldehydes. The biologically relevant substrate of the enzyme is not known as the enzyme exhibits broad substrate specificity from small alcohols through sugars to oligo- and polysaccharides.</text>
</comment>
<comment type="catalytic activity">
    <reaction>
        <text>D-galactose + O2 = D-galacto-hexodialdose + H2O2</text>
        <dbReference type="Rhea" id="RHEA:24160"/>
        <dbReference type="ChEBI" id="CHEBI:4139"/>
        <dbReference type="ChEBI" id="CHEBI:15379"/>
        <dbReference type="ChEBI" id="CHEBI:16222"/>
        <dbReference type="ChEBI" id="CHEBI:16240"/>
        <dbReference type="EC" id="1.1.3.9"/>
    </reaction>
</comment>
<comment type="cofactor">
    <cofactor>
        <name>Cu(2+)</name>
        <dbReference type="ChEBI" id="CHEBI:29036"/>
    </cofactor>
    <text>Binds 1 Cu(2+) ion per subunit.</text>
</comment>
<comment type="activity regulation">
    <text evidence="3">Inhibited by diethyldithiocarbamate.</text>
</comment>
<comment type="biophysicochemical properties">
    <kinetics>
        <KM evidence="4 5 6 9 10">56 mM for 1-methyl-alpha-D-galactopyranoside</KM>
        <KM evidence="4 5 6 9 10">57 mM for 2-methylene-1,3-propanediol</KM>
        <KM evidence="4 5 6 9 10">68 mM for D-galactose</KM>
        <KM evidence="4 5 6 9 10">2.5 M for D-fructose</KM>
    </kinetics>
    <phDependence>
        <text evidence="4 5 6 9 10">Optimum pH is 7. Active from pH 5.7 to 9.4.</text>
    </phDependence>
</comment>
<comment type="subunit">
    <text evidence="4 6 7 8 9 10">Monomer.</text>
</comment>
<comment type="subcellular location">
    <subcellularLocation>
        <location>Secreted</location>
    </subcellularLocation>
</comment>
<comment type="PTM">
    <text>Galactose oxidase contains a protein-derived free radical cofactor. In the active state, Tyr-313, which is cross-linked to Cys-269 via a thioether bond, is oxidized to a radical and acts with Cu(2+) as a two-electron acceptor in the oxidation reaction. The cross-link is believed to modulate the redox potential of the tyrosyl radical, which is further stabilized by a stacking interaction with Trp-331 in the active site. The post-translational formation of the cross-link is closely linked to the propeptide cleavage event, and both are copper-dependent, autocatalytic processes. The propeptide may act as an intramolecular chaperone, facilitating thioester bond formation and copper binding by positioning of active-site residues, including copper ligands.</text>
</comment>
<comment type="mass spectrometry"/>
<comment type="caution">
    <text evidence="12">Was originally thought to originate from Polyporus circinatus then later from Dactylium dendroides and is now known to be originating from Gibberella (Fusarium).</text>
</comment>
<comment type="online information" name="Worthington enzyme manual">
    <link uri="https://www.worthington-biochem.com/GAO/"/>
</comment>
<evidence type="ECO:0000255" key="1">
    <source>
        <dbReference type="PROSITE-ProRule" id="PRU00081"/>
    </source>
</evidence>
<evidence type="ECO:0000269" key="2">
    <source>
    </source>
</evidence>
<evidence type="ECO:0000269" key="3">
    <source>
    </source>
</evidence>
<evidence type="ECO:0000269" key="4">
    <source>
    </source>
</evidence>
<evidence type="ECO:0000269" key="5">
    <source>
    </source>
</evidence>
<evidence type="ECO:0000269" key="6">
    <source>
    </source>
</evidence>
<evidence type="ECO:0000269" key="7">
    <source>
    </source>
</evidence>
<evidence type="ECO:0000269" key="8">
    <source>
    </source>
</evidence>
<evidence type="ECO:0000269" key="9">
    <source>
    </source>
</evidence>
<evidence type="ECO:0000269" key="10">
    <source ref="15"/>
</evidence>
<evidence type="ECO:0000269" key="11">
    <source ref="2"/>
</evidence>
<evidence type="ECO:0000305" key="12"/>
<evidence type="ECO:0007829" key="13">
    <source>
        <dbReference type="PDB" id="1GOH"/>
    </source>
</evidence>
<evidence type="ECO:0007829" key="14">
    <source>
        <dbReference type="PDB" id="1K3I"/>
    </source>
</evidence>
<evidence type="ECO:0007829" key="15">
    <source>
        <dbReference type="PDB" id="6XLR"/>
    </source>
</evidence>
<feature type="signal peptide" evidence="11">
    <location>
        <begin position="1"/>
        <end position="24"/>
    </location>
</feature>
<feature type="propeptide" id="PRO_0000285407" evidence="5 11">
    <location>
        <begin position="25"/>
        <end position="41"/>
    </location>
</feature>
<feature type="chain" id="PRO_0000016610" description="Galactose oxidase">
    <location>
        <begin position="42"/>
        <end position="680"/>
    </location>
</feature>
<feature type="domain" description="F5/8 type C" evidence="1">
    <location>
        <begin position="42"/>
        <end position="189"/>
    </location>
</feature>
<feature type="repeat" description="Kelch 1">
    <location>
        <begin position="223"/>
        <end position="268"/>
    </location>
</feature>
<feature type="repeat" description="Kelch 2">
    <location>
        <begin position="279"/>
        <end position="321"/>
    </location>
</feature>
<feature type="repeat" description="Kelch 3">
    <location>
        <begin position="323"/>
        <end position="372"/>
    </location>
</feature>
<feature type="repeat" description="Kelch 4">
    <location>
        <begin position="436"/>
        <end position="490"/>
    </location>
</feature>
<feature type="repeat" description="Kelch 5">
    <location>
        <begin position="492"/>
        <end position="544"/>
    </location>
</feature>
<feature type="active site" description="Proton acceptor" evidence="10">
    <location>
        <position position="536"/>
    </location>
</feature>
<feature type="binding site">
    <location>
        <position position="313"/>
    </location>
    <ligand>
        <name>Cu cation</name>
        <dbReference type="ChEBI" id="CHEBI:23378"/>
    </ligand>
</feature>
<feature type="binding site">
    <location>
        <position position="536"/>
    </location>
    <ligand>
        <name>Cu cation</name>
        <dbReference type="ChEBI" id="CHEBI:23378"/>
    </ligand>
</feature>
<feature type="binding site">
    <location>
        <position position="537"/>
    </location>
    <ligand>
        <name>Cu cation</name>
        <dbReference type="ChEBI" id="CHEBI:23378"/>
    </ligand>
</feature>
<feature type="binding site">
    <location>
        <position position="622"/>
    </location>
    <ligand>
        <name>Cu cation</name>
        <dbReference type="ChEBI" id="CHEBI:23378"/>
    </ligand>
</feature>
<feature type="disulfide bond">
    <location>
        <begin position="59"/>
        <end position="68"/>
    </location>
</feature>
<feature type="disulfide bond">
    <location>
        <begin position="556"/>
        <end position="559"/>
    </location>
</feature>
<feature type="cross-link" description="3'-(S-cysteinyl)-tyrosine (Cys-Tyr)">
    <location>
        <begin position="269"/>
        <end position="313"/>
    </location>
</feature>
<feature type="mutagenesis site" description="Reduces catalytic activity more than 10000-fold.">
    <original>C</original>
    <variation>G</variation>
    <location>
        <position position="269"/>
    </location>
</feature>
<feature type="mutagenesis site" description="Reduces catalytic efficiency 50-fold and substrate affinity 36-fold.">
    <original>W</original>
    <variation>F</variation>
    <location>
        <position position="331"/>
    </location>
</feature>
<feature type="mutagenesis site" description="Reduces substrate affinity 20-fold and catalytic activity more than 6000-fold.">
    <original>W</original>
    <variation>G</variation>
    <location>
        <position position="331"/>
    </location>
</feature>
<feature type="mutagenesis site" description="Reduces catalytic efficiency 1000-fold.">
    <original>W</original>
    <variation>H</variation>
    <location>
        <position position="331"/>
    </location>
</feature>
<feature type="mutagenesis site" description="Reduces catalytic efficiency 250-fold and substrate affinity 22-fold for D-galactose, but improves catalytic efficiency 1.8-fold towards D-fructose." evidence="5">
    <original>R</original>
    <variation>A</variation>
    <location>
        <position position="371"/>
    </location>
</feature>
<feature type="mutagenesis site" description="Reduces catalytic efficiency 45-fold and substrate affinity 8.7-fold for D-galactose, but improves catalytic efficiency 8-fold towards D-fructose." evidence="5">
    <original>R</original>
    <variation>K</variation>
    <location>
        <position position="371"/>
    </location>
</feature>
<feature type="mutagenesis site" description="Reduces catalytic efficiency 1.5- to 2-fold towards D-galactose and 1-methyl-alpha-D-galactopyranoside." evidence="4">
    <original>C</original>
    <variation>A</variation>
    <location>
        <position position="424"/>
    </location>
</feature>
<feature type="mutagenesis site" description="Improves catalytic efficiency 3- to 4-fold towards D-galactose and 1-methyl-alpha-D-galactopyranoside, mainly by increasing the affinity for the substrates. Improves catalytic efficiency 5.3-fold towards D-galactose; when associated with H-477. Improves catalytic efficiency 4.9-fold towards 1-methyl-alpha-D-galactopyranoside; when associated with A-535. Improves catalytic activity 4.7-fold towards D-galactose, but only 1.8-fold towards 1-methyl-alpha-D-galactopyranoside; when associated with A-477." evidence="4">
    <original>C</original>
    <variation>S</variation>
    <location>
        <position position="424"/>
    </location>
</feature>
<feature type="mutagenesis site" description="No effect. Improves catalytic efficiency 2- to 3-fold towards D-galactose and 1-methyl-alpha-D-galactopyranoside; when associated with A-535. Improves catalytic activity 4.7-fold towards D-galactose, but only 1.8-fold towards 1-methyl-alpha-D-galactopyranoside; when associated with S-424." evidence="4">
    <original>Y</original>
    <variation>A</variation>
    <location>
        <position position="477"/>
    </location>
</feature>
<feature type="mutagenesis site" description="No effect. Improves catalytic efficiency 5.3-fold towards D-galactose; when associated with S-424." evidence="4">
    <original>Y</original>
    <variation>H</variation>
    <location>
        <position position="477"/>
    </location>
</feature>
<feature type="mutagenesis site" description="Reduces catalytic efficiency 166-fold and substrate affinity 9-fold." evidence="5">
    <original>F</original>
    <variation>A</variation>
    <location>
        <position position="505"/>
    </location>
</feature>
<feature type="mutagenesis site" description="Improves catalytic efficiency 1.3- to 1.8-fold. Improves catalytic efficiency 2- to 3-fold towards D-galactose and 1-methyl-alpha-D-galactopyranoside; when associated with A-477. Improves catalytic efficiency 4.9-fold towards 1-methyl-alpha-D-galactopyranoside; when associated with S-424." evidence="4">
    <original>V</original>
    <variation>A</variation>
    <location>
        <position position="535"/>
    </location>
</feature>
<feature type="mutagenesis site" description="Reduces catalytic efficiency 1000-fold, but does not reduce substrate affinity.">
    <original>Y</original>
    <variation>F</variation>
    <location>
        <position position="536"/>
    </location>
</feature>
<feature type="sequence conflict" description="In Ref. 4; AAB94635." evidence="12" ref="4">
    <original>M</original>
    <variation>I</variation>
    <location>
        <position position="111"/>
    </location>
</feature>
<feature type="helix" evidence="14">
    <location>
        <begin position="35"/>
        <end position="37"/>
    </location>
</feature>
<feature type="strand" evidence="15">
    <location>
        <begin position="46"/>
        <end position="49"/>
    </location>
</feature>
<feature type="strand" evidence="15">
    <location>
        <begin position="56"/>
        <end position="60"/>
    </location>
</feature>
<feature type="helix" evidence="15">
    <location>
        <begin position="68"/>
        <end position="71"/>
    </location>
</feature>
<feature type="strand" evidence="15">
    <location>
        <begin position="72"/>
        <end position="74"/>
    </location>
</feature>
<feature type="helix" evidence="15">
    <location>
        <begin position="85"/>
        <end position="87"/>
    </location>
</feature>
<feature type="strand" evidence="15">
    <location>
        <begin position="94"/>
        <end position="112"/>
    </location>
</feature>
<feature type="strand" evidence="15">
    <location>
        <begin position="115"/>
        <end position="117"/>
    </location>
</feature>
<feature type="strand" evidence="15">
    <location>
        <begin position="125"/>
        <end position="135"/>
    </location>
</feature>
<feature type="strand" evidence="15">
    <location>
        <begin position="141"/>
        <end position="145"/>
    </location>
</feature>
<feature type="strand" evidence="15">
    <location>
        <begin position="148"/>
        <end position="151"/>
    </location>
</feature>
<feature type="strand" evidence="15">
    <location>
        <begin position="153"/>
        <end position="169"/>
    </location>
</feature>
<feature type="strand" evidence="15">
    <location>
        <begin position="180"/>
        <end position="188"/>
    </location>
</feature>
<feature type="strand" evidence="15">
    <location>
        <begin position="201"/>
        <end position="207"/>
    </location>
</feature>
<feature type="strand" evidence="15">
    <location>
        <begin position="213"/>
        <end position="217"/>
    </location>
</feature>
<feature type="turn" evidence="15">
    <location>
        <begin position="219"/>
        <end position="221"/>
    </location>
</feature>
<feature type="strand" evidence="15">
    <location>
        <begin position="224"/>
        <end position="227"/>
    </location>
</feature>
<feature type="strand" evidence="15">
    <location>
        <begin position="229"/>
        <end position="233"/>
    </location>
</feature>
<feature type="strand" evidence="15">
    <location>
        <begin position="243"/>
        <end position="248"/>
    </location>
</feature>
<feature type="turn" evidence="15">
    <location>
        <begin position="250"/>
        <end position="252"/>
    </location>
</feature>
<feature type="strand" evidence="15">
    <location>
        <begin position="255"/>
        <end position="260"/>
    </location>
</feature>
<feature type="strand" evidence="15">
    <location>
        <begin position="271"/>
        <end position="274"/>
    </location>
</feature>
<feature type="strand" evidence="15">
    <location>
        <begin position="278"/>
        <end position="283"/>
    </location>
</feature>
<feature type="strand" evidence="14">
    <location>
        <begin position="285"/>
        <end position="287"/>
    </location>
</feature>
<feature type="strand" evidence="15">
    <location>
        <begin position="291"/>
        <end position="295"/>
    </location>
</feature>
<feature type="turn" evidence="15">
    <location>
        <begin position="296"/>
        <end position="299"/>
    </location>
</feature>
<feature type="strand" evidence="15">
    <location>
        <begin position="300"/>
        <end position="303"/>
    </location>
</feature>
<feature type="strand" evidence="15">
    <location>
        <begin position="315"/>
        <end position="318"/>
    </location>
</feature>
<feature type="strand" evidence="15">
    <location>
        <begin position="324"/>
        <end position="327"/>
    </location>
</feature>
<feature type="strand" evidence="15">
    <location>
        <begin position="330"/>
        <end position="333"/>
    </location>
</feature>
<feature type="strand" evidence="15">
    <location>
        <begin position="340"/>
        <end position="344"/>
    </location>
</feature>
<feature type="turn" evidence="15">
    <location>
        <begin position="345"/>
        <end position="348"/>
    </location>
</feature>
<feature type="strand" evidence="15">
    <location>
        <begin position="349"/>
        <end position="353"/>
    </location>
</feature>
<feature type="helix" evidence="15">
    <location>
        <begin position="359"/>
        <end position="361"/>
    </location>
</feature>
<feature type="turn" evidence="15">
    <location>
        <begin position="366"/>
        <end position="368"/>
    </location>
</feature>
<feature type="helix" evidence="15">
    <location>
        <begin position="369"/>
        <end position="372"/>
    </location>
</feature>
<feature type="strand" evidence="15">
    <location>
        <begin position="378"/>
        <end position="380"/>
    </location>
</feature>
<feature type="helix" evidence="15">
    <location>
        <begin position="382"/>
        <end position="384"/>
    </location>
</feature>
<feature type="strand" evidence="15">
    <location>
        <begin position="386"/>
        <end position="388"/>
    </location>
</feature>
<feature type="strand" evidence="15">
    <location>
        <begin position="391"/>
        <end position="399"/>
    </location>
</feature>
<feature type="strand" evidence="15">
    <location>
        <begin position="405"/>
        <end position="411"/>
    </location>
</feature>
<feature type="strand" evidence="15">
    <location>
        <begin position="426"/>
        <end position="431"/>
    </location>
</feature>
<feature type="turn" evidence="15">
    <location>
        <begin position="432"/>
        <end position="435"/>
    </location>
</feature>
<feature type="strand" evidence="15">
    <location>
        <begin position="436"/>
        <end position="440"/>
    </location>
</feature>
<feature type="strand" evidence="15">
    <location>
        <begin position="443"/>
        <end position="448"/>
    </location>
</feature>
<feature type="strand" evidence="15">
    <location>
        <begin position="455"/>
        <end position="459"/>
    </location>
</feature>
<feature type="strand" evidence="15">
    <location>
        <begin position="468"/>
        <end position="471"/>
    </location>
</feature>
<feature type="strand" evidence="13">
    <location>
        <begin position="480"/>
        <end position="482"/>
    </location>
</feature>
<feature type="strand" evidence="15">
    <location>
        <begin position="484"/>
        <end position="487"/>
    </location>
</feature>
<feature type="strand" evidence="15">
    <location>
        <begin position="493"/>
        <end position="496"/>
    </location>
</feature>
<feature type="strand" evidence="15">
    <location>
        <begin position="499"/>
        <end position="501"/>
    </location>
</feature>
<feature type="strand" evidence="15">
    <location>
        <begin position="515"/>
        <end position="518"/>
    </location>
</feature>
<feature type="turn" evidence="15">
    <location>
        <begin position="519"/>
        <end position="522"/>
    </location>
</feature>
<feature type="strand" evidence="15">
    <location>
        <begin position="523"/>
        <end position="526"/>
    </location>
</feature>
<feature type="strand" evidence="15">
    <location>
        <begin position="538"/>
        <end position="542"/>
    </location>
</feature>
<feature type="strand" evidence="15">
    <location>
        <begin position="548"/>
        <end position="552"/>
    </location>
</feature>
<feature type="strand" evidence="15">
    <location>
        <begin position="565"/>
        <end position="570"/>
    </location>
</feature>
<feature type="helix" evidence="15">
    <location>
        <begin position="572"/>
        <end position="574"/>
    </location>
</feature>
<feature type="strand" evidence="15">
    <location>
        <begin position="579"/>
        <end position="581"/>
    </location>
</feature>
<feature type="strand" evidence="15">
    <location>
        <begin position="587"/>
        <end position="591"/>
    </location>
</feature>
<feature type="strand" evidence="15">
    <location>
        <begin position="593"/>
        <end position="596"/>
    </location>
</feature>
<feature type="strand" evidence="15">
    <location>
        <begin position="600"/>
        <end position="607"/>
    </location>
</feature>
<feature type="strand" evidence="15">
    <location>
        <begin position="610"/>
        <end position="616"/>
    </location>
</feature>
<feature type="strand" evidence="15">
    <location>
        <begin position="619"/>
        <end position="621"/>
    </location>
</feature>
<feature type="strand" evidence="15">
    <location>
        <begin position="630"/>
        <end position="632"/>
    </location>
</feature>
<feature type="strand" evidence="15">
    <location>
        <begin position="636"/>
        <end position="639"/>
    </location>
</feature>
<feature type="strand" evidence="15">
    <location>
        <begin position="642"/>
        <end position="646"/>
    </location>
</feature>
<feature type="turn" evidence="15">
    <location>
        <begin position="651"/>
        <end position="653"/>
    </location>
</feature>
<feature type="strand" evidence="15">
    <location>
        <begin position="656"/>
        <end position="664"/>
    </location>
</feature>
<feature type="strand" evidence="15">
    <location>
        <begin position="674"/>
        <end position="679"/>
    </location>
</feature>
<dbReference type="EC" id="1.1.3.9"/>
<dbReference type="EMBL" id="M86819">
    <property type="protein sequence ID" value="AAA16228.1"/>
    <property type="molecule type" value="Unassigned_DNA"/>
</dbReference>
<dbReference type="EMBL" id="AH005781">
    <property type="protein sequence ID" value="AAB94635.1"/>
    <property type="molecule type" value="Genomic_DNA"/>
</dbReference>
<dbReference type="PDB" id="1GOF">
    <property type="method" value="X-ray"/>
    <property type="resolution" value="1.70 A"/>
    <property type="chains" value="A=42-680"/>
</dbReference>
<dbReference type="PDB" id="1GOG">
    <property type="method" value="X-ray"/>
    <property type="resolution" value="1.90 A"/>
    <property type="chains" value="A=42-680"/>
</dbReference>
<dbReference type="PDB" id="1GOH">
    <property type="method" value="X-ray"/>
    <property type="resolution" value="2.20 A"/>
    <property type="chains" value="A=42-680"/>
</dbReference>
<dbReference type="PDB" id="1K3I">
    <property type="method" value="X-ray"/>
    <property type="resolution" value="1.40 A"/>
    <property type="chains" value="A=25-680"/>
</dbReference>
<dbReference type="PDB" id="1T2X">
    <property type="method" value="X-ray"/>
    <property type="resolution" value="2.30 A"/>
    <property type="chains" value="A=42-680"/>
</dbReference>
<dbReference type="PDB" id="2EIB">
    <property type="method" value="X-ray"/>
    <property type="resolution" value="2.10 A"/>
    <property type="chains" value="A=42-680"/>
</dbReference>
<dbReference type="PDB" id="2EIC">
    <property type="method" value="X-ray"/>
    <property type="resolution" value="2.80 A"/>
    <property type="chains" value="A=42-680"/>
</dbReference>
<dbReference type="PDB" id="2EID">
    <property type="method" value="X-ray"/>
    <property type="resolution" value="2.20 A"/>
    <property type="chains" value="A=42-680"/>
</dbReference>
<dbReference type="PDB" id="2EIE">
    <property type="method" value="X-ray"/>
    <property type="resolution" value="1.80 A"/>
    <property type="chains" value="A=42-680"/>
</dbReference>
<dbReference type="PDB" id="2JKX">
    <property type="method" value="X-ray"/>
    <property type="resolution" value="1.84 A"/>
    <property type="chains" value="A=42-680"/>
</dbReference>
<dbReference type="PDB" id="2VZ1">
    <property type="method" value="X-ray"/>
    <property type="resolution" value="1.91 A"/>
    <property type="chains" value="A=42-680"/>
</dbReference>
<dbReference type="PDB" id="2VZ3">
    <property type="method" value="X-ray"/>
    <property type="resolution" value="1.90 A"/>
    <property type="chains" value="A=42-680"/>
</dbReference>
<dbReference type="PDB" id="2WQ8">
    <property type="method" value="X-ray"/>
    <property type="resolution" value="2.19 A"/>
    <property type="chains" value="A=42-680"/>
</dbReference>
<dbReference type="PDB" id="6XLR">
    <property type="method" value="X-ray"/>
    <property type="resolution" value="1.23 A"/>
    <property type="chains" value="A=42-680"/>
</dbReference>
<dbReference type="PDB" id="6XLS">
    <property type="method" value="X-ray"/>
    <property type="resolution" value="1.80 A"/>
    <property type="chains" value="A=42-680"/>
</dbReference>
<dbReference type="PDB" id="6XLT">
    <property type="method" value="X-ray"/>
    <property type="resolution" value="1.48 A"/>
    <property type="chains" value="A=42-680"/>
</dbReference>
<dbReference type="PDB" id="8TX5">
    <property type="method" value="X-ray"/>
    <property type="resolution" value="1.93 A"/>
    <property type="chains" value="A/B/C/D=42-680"/>
</dbReference>
<dbReference type="PDB" id="8TX6">
    <property type="method" value="X-ray"/>
    <property type="resolution" value="1.56 A"/>
    <property type="chains" value="A=42-680"/>
</dbReference>
<dbReference type="PDBsum" id="1GOF"/>
<dbReference type="PDBsum" id="1GOG"/>
<dbReference type="PDBsum" id="1GOH"/>
<dbReference type="PDBsum" id="1K3I"/>
<dbReference type="PDBsum" id="1T2X"/>
<dbReference type="PDBsum" id="2EIB"/>
<dbReference type="PDBsum" id="2EIC"/>
<dbReference type="PDBsum" id="2EID"/>
<dbReference type="PDBsum" id="2EIE"/>
<dbReference type="PDBsum" id="2JKX"/>
<dbReference type="PDBsum" id="2VZ1"/>
<dbReference type="PDBsum" id="2VZ3"/>
<dbReference type="PDBsum" id="2WQ8"/>
<dbReference type="PDBsum" id="6XLR"/>
<dbReference type="PDBsum" id="6XLS"/>
<dbReference type="PDBsum" id="6XLT"/>
<dbReference type="PDBsum" id="8TX5"/>
<dbReference type="PDBsum" id="8TX6"/>
<dbReference type="SMR" id="P0CS93"/>
<dbReference type="CAZy" id="AA5">
    <property type="family name" value="Auxiliary Activities 5"/>
</dbReference>
<dbReference type="CAZy" id="CBM32">
    <property type="family name" value="Carbohydrate-Binding Module Family 32"/>
</dbReference>
<dbReference type="BioCyc" id="MetaCyc:MONOMER-15357"/>
<dbReference type="BRENDA" id="1.1.3.9">
    <property type="organism ID" value="2428"/>
</dbReference>
<dbReference type="SABIO-RK" id="P0CS93"/>
<dbReference type="EvolutionaryTrace" id="P0CS93"/>
<dbReference type="GO" id="GO:0005576">
    <property type="term" value="C:extracellular region"/>
    <property type="evidence" value="ECO:0007669"/>
    <property type="project" value="UniProtKB-SubCell"/>
</dbReference>
<dbReference type="GO" id="GO:0045480">
    <property type="term" value="F:galactose oxidase activity"/>
    <property type="evidence" value="ECO:0007669"/>
    <property type="project" value="UniProtKB-EC"/>
</dbReference>
<dbReference type="GO" id="GO:0046872">
    <property type="term" value="F:metal ion binding"/>
    <property type="evidence" value="ECO:0007669"/>
    <property type="project" value="UniProtKB-KW"/>
</dbReference>
<dbReference type="CDD" id="cd02851">
    <property type="entry name" value="E_set_GO_C"/>
    <property type="match status" value="1"/>
</dbReference>
<dbReference type="CDD" id="cd00057">
    <property type="entry name" value="FA58C"/>
    <property type="match status" value="1"/>
</dbReference>
<dbReference type="Gene3D" id="2.130.10.80">
    <property type="entry name" value="Galactose oxidase/kelch, beta-propeller"/>
    <property type="match status" value="1"/>
</dbReference>
<dbReference type="Gene3D" id="2.60.120.260">
    <property type="entry name" value="Galactose-binding domain-like"/>
    <property type="match status" value="1"/>
</dbReference>
<dbReference type="Gene3D" id="2.60.40.10">
    <property type="entry name" value="Immunoglobulins"/>
    <property type="match status" value="1"/>
</dbReference>
<dbReference type="InterPro" id="IPR000421">
    <property type="entry name" value="FA58C"/>
</dbReference>
<dbReference type="InterPro" id="IPR011043">
    <property type="entry name" value="Gal_Oxase/kelch_b-propeller"/>
</dbReference>
<dbReference type="InterPro" id="IPR037293">
    <property type="entry name" value="Gal_Oxidase_central_sf"/>
</dbReference>
<dbReference type="InterPro" id="IPR008979">
    <property type="entry name" value="Galactose-bd-like_sf"/>
</dbReference>
<dbReference type="InterPro" id="IPR015202">
    <property type="entry name" value="GO-like_E_set"/>
</dbReference>
<dbReference type="InterPro" id="IPR013783">
    <property type="entry name" value="Ig-like_fold"/>
</dbReference>
<dbReference type="InterPro" id="IPR014756">
    <property type="entry name" value="Ig_E-set"/>
</dbReference>
<dbReference type="InterPro" id="IPR006652">
    <property type="entry name" value="Kelch_1"/>
</dbReference>
<dbReference type="PANTHER" id="PTHR32208:SF68">
    <property type="entry name" value="GALACTOSE OXIDASE"/>
    <property type="match status" value="1"/>
</dbReference>
<dbReference type="PANTHER" id="PTHR32208">
    <property type="entry name" value="SECRETED PROTEIN-RELATED"/>
    <property type="match status" value="1"/>
</dbReference>
<dbReference type="Pfam" id="PF00754">
    <property type="entry name" value="F5_F8_type_C"/>
    <property type="match status" value="1"/>
</dbReference>
<dbReference type="Pfam" id="PF09118">
    <property type="entry name" value="GO-like_E_set"/>
    <property type="match status" value="1"/>
</dbReference>
<dbReference type="Pfam" id="PF01344">
    <property type="entry name" value="Kelch_1"/>
    <property type="match status" value="1"/>
</dbReference>
<dbReference type="SMART" id="SM00231">
    <property type="entry name" value="FA58C"/>
    <property type="match status" value="1"/>
</dbReference>
<dbReference type="SMART" id="SM00612">
    <property type="entry name" value="Kelch"/>
    <property type="match status" value="3"/>
</dbReference>
<dbReference type="SUPFAM" id="SSF81296">
    <property type="entry name" value="E set domains"/>
    <property type="match status" value="1"/>
</dbReference>
<dbReference type="SUPFAM" id="SSF50965">
    <property type="entry name" value="Galactose oxidase, central domain"/>
    <property type="match status" value="1"/>
</dbReference>
<dbReference type="SUPFAM" id="SSF49785">
    <property type="entry name" value="Galactose-binding domain-like"/>
    <property type="match status" value="1"/>
</dbReference>
<dbReference type="PROSITE" id="PS50022">
    <property type="entry name" value="FA58C_3"/>
    <property type="match status" value="1"/>
</dbReference>
<organism>
    <name type="scientific">Gibberella zeae</name>
    <name type="common">Wheat head blight fungus</name>
    <name type="synonym">Fusarium graminearum</name>
    <dbReference type="NCBI Taxonomy" id="5518"/>
    <lineage>
        <taxon>Eukaryota</taxon>
        <taxon>Fungi</taxon>
        <taxon>Dikarya</taxon>
        <taxon>Ascomycota</taxon>
        <taxon>Pezizomycotina</taxon>
        <taxon>Sordariomycetes</taxon>
        <taxon>Hypocreomycetidae</taxon>
        <taxon>Hypocreales</taxon>
        <taxon>Nectriaceae</taxon>
        <taxon>Fusarium</taxon>
    </lineage>
</organism>
<name>GAOA_GIBZA</name>
<accession>P0CS93</accession>
<accession>O43098</accession>
<accession>Q01745</accession>
<accession>Q4HVH6</accession>
<reference key="1">
    <citation type="journal article" date="1992" name="J. Biol. Chem.">
        <title>Galactose oxidase of Dactylium dendroides. Gene cloning and sequence analysis.</title>
        <authorList>
            <person name="McPherson M.J."/>
            <person name="Ogel Z.B."/>
            <person name="Stevens C.E."/>
            <person name="Yadav K.D.S."/>
            <person name="Keen J.N."/>
            <person name="Knowles P.F."/>
        </authorList>
    </citation>
    <scope>NUCLEOTIDE SEQUENCE [GENOMIC DNA]</scope>
    <scope>PARTIAL PROTEIN SEQUENCE</scope>
    <source>
        <strain>ATCC 46032 / CBS 110244 / NRRL 2903</strain>
    </source>
</reference>
<reference key="2">
    <citation type="journal article" date="2000" name="J. Am. Chem. Soc.">
        <title>Galactose oxidase pro-sequence cleavage and cofactor assembly are self-processing reactions.</title>
        <authorList>
            <person name="Rogers M.S."/>
            <person name="Baron A.J."/>
            <person name="McPherson M.J."/>
            <person name="Knowles P.F."/>
            <person name="Dooley D.M."/>
        </authorList>
    </citation>
    <scope>PROTEIN SEQUENCE OF 25-33 AND 42-50</scope>
    <scope>PROPEPTIDE CLEAVAGE</scope>
    <source>
        <strain>ATCC 46032 / CBS 110244 / NRRL 2903</strain>
    </source>
</reference>
<reference key="3">
    <citation type="journal article" date="2004" name="ChemBioChem">
        <title>Enhanced fructose oxidase activity in a galactose oxidase variant.</title>
        <authorList>
            <person name="Deacon S.E."/>
            <person name="Mahmoud K."/>
            <person name="Spooner R.K."/>
            <person name="Firbank S.J."/>
            <person name="Knowles P.F."/>
            <person name="Phillips S.E."/>
            <person name="McPherson M.J."/>
        </authorList>
    </citation>
    <scope>PROTEIN SEQUENCE OF 42-47</scope>
    <scope>BIOPHYSICOCHEMICAL PROPERTIES</scope>
    <scope>MUTAGENESIS OF ARG-371 AND PHE-505</scope>
</reference>
<reference key="4">
    <citation type="journal article" date="1997" name="Syst. Appl. Microbiol.">
        <title>Specific identification of Fusarium graminearum by PCR with gaoA targeted primers.</title>
        <authorList>
            <person name="Niessen M.L."/>
            <person name="Vogel R.F."/>
        </authorList>
    </citation>
    <scope>NUCLEOTIDE SEQUENCE [GENOMIC DNA] OF 98-142</scope>
    <source>
        <strain>DSM 4527 / 183</strain>
    </source>
</reference>
<reference key="5">
    <citation type="journal article" date="1959" name="J. Biol. Chem.">
        <title>Galactose oxidase from Polyporus circinatus, Fr.</title>
        <authorList>
            <person name="Cooper J.A."/>
            <person name="Smith W."/>
            <person name="Bacila M."/>
            <person name="Medina H."/>
        </authorList>
    </citation>
    <scope>FUNCTION</scope>
</reference>
<reference key="6">
    <citation type="journal article" date="1962" name="J. Biol. Chem.">
        <title>The D-galactose oxidase of Polyporus circinatus.</title>
        <authorList>
            <person name="Avigad G."/>
            <person name="Amaral D."/>
            <person name="Asensio C."/>
            <person name="Horecker B.L."/>
        </authorList>
    </citation>
    <scope>SUBSTRATE SPECIFICITY</scope>
</reference>
<reference key="7">
    <citation type="journal article" date="1963" name="Biochem. Biophys. Res. Commun.">
        <title>Dactylium dendroides (Bull.) Fr. misnamed as Polyporus circinatus Fr.</title>
        <authorList>
            <person name="Nobles M.K."/>
            <person name="Madhosingh C."/>
        </authorList>
    </citation>
    <scope>TAXONOMY</scope>
</reference>
<reference key="8">
    <citation type="journal article" date="1963" name="J. Biol. Chem.">
        <title>Galactose oxidase of Polyporus circinatus: a copper enzyme.</title>
        <authorList>
            <person name="Amaral D."/>
            <person name="Bernstein L."/>
            <person name="Morse D."/>
            <person name="Horecker B.L."/>
        </authorList>
    </citation>
    <scope>ACTIVITY REGULATION</scope>
    <scope>COPPER-BINDING</scope>
</reference>
<reference key="9">
    <citation type="journal article" date="1974" name="Arch. Biochem. Biophys.">
        <title>The molecular properties of the copper enzyme galactose oxidase.</title>
        <authorList>
            <person name="Kosman D.J."/>
            <person name="Ettinger M.J."/>
            <person name="Weiner R.E."/>
            <person name="Massaro E.J."/>
        </authorList>
    </citation>
    <scope>FUNCTION</scope>
    <scope>SUBUNIT</scope>
</reference>
<reference key="10">
    <citation type="journal article" date="1994" name="Mycol. Res.">
        <title>Cellulose-triggered sporulation in the galactose oxidase producing fungus Cladobotryum (Dactylium) dendroides NRRL 2903 and its re-identification as a species of Fusarium.</title>
        <authorList>
            <person name="Ogel Z.B."/>
            <person name="Brayford D."/>
            <person name="McPherson M.J."/>
        </authorList>
        <dbReference type="AGRICOLA" id="IND20498749"/>
    </citation>
    <scope>TAXONOMY</scope>
</reference>
<reference key="11">
    <citation type="journal article" date="2001" name="Biochemistry">
        <title>Catalytic reaction profile for alcohol oxidation by galactose oxidase.</title>
        <authorList>
            <person name="Whittaker M.M."/>
            <person name="Whittaker J.W."/>
        </authorList>
    </citation>
    <scope>REACTION MECHANISM</scope>
</reference>
<reference key="12">
    <citation type="journal article" date="2003" name="J. Biol. Chem.">
        <title>Cu(I)-dependent biogenesis of the galactose oxidase redox cofactor.</title>
        <authorList>
            <person name="Whittaker M.M."/>
            <person name="Whittaker J.W."/>
        </authorList>
    </citation>
    <scope>PROTEIN MATURATION</scope>
</reference>
<reference key="13">
    <citation type="journal article" date="1991" name="Nature">
        <title>Novel thioether bond revealed by a 1.7 A crystal structure of galactose oxidase.</title>
        <authorList>
            <person name="Ito N."/>
            <person name="Phillips S.E.V."/>
            <person name="Stevens C.E."/>
            <person name="Ogel Z.B."/>
            <person name="McPherson M.J."/>
            <person name="Keen J.N."/>
            <person name="Yadav K.D.S."/>
            <person name="Knowles P.F."/>
        </authorList>
    </citation>
    <scope>X-RAY CRYSTALLOGRAPHY (1.7 ANGSTROMS) OF 42-680 IN COMPLEX WITH COPPER IONS</scope>
</reference>
<reference key="14">
    <citation type="journal article" date="1994" name="J. Biol. Chem.">
        <title>Structure and mechanism of galactose oxidase. The free radical site.</title>
        <authorList>
            <person name="Baron A.J."/>
            <person name="Stevens C."/>
            <person name="Wilmot C."/>
            <person name="Seneviratne K.D."/>
            <person name="Blakeley V."/>
            <person name="Dooley D.M."/>
            <person name="Phillips S.E."/>
            <person name="Knowles P.F."/>
            <person name="McPherson M.J."/>
        </authorList>
    </citation>
    <scope>X-RAY CRYSTALLOGRAPHY (2.0 ANGSTROMS) OF 42-680 OF MUTANTS GLY-269 AND HIS-331 IN COMPLEX WITH COPPER IONS</scope>
    <scope>BIOPHYSICOCHEMICAL PROPERTIES</scope>
</reference>
<reference key="15">
    <citation type="journal article" date="1997" name="J. Biol. Inorg. Chem.">
        <title>Structure and mechanism of galactose oxidase: catalytic role of tyrosine 495.</title>
        <authorList>
            <person name="Reynolds M.P."/>
            <person name="Baron A.J."/>
            <person name="Wilmot C.M."/>
            <person name="Vinecombe E."/>
            <person name="Stevens C."/>
            <person name="Phillips S.E.V."/>
            <person name="Knowles P.F."/>
            <person name="McPherson M.J."/>
        </authorList>
    </citation>
    <scope>X-RAY CRYSTALLOGRAPHY (2.8 ANGSTROMS) OF 42-680 OF MUTANT PHE-536 IN COMPLEX WITH COPPER IONS</scope>
    <scope>ACTIVE SITE</scope>
    <scope>BIOPHYSICOCHEMICAL PROPERTIES</scope>
</reference>
<reference key="16">
    <citation type="journal article" date="2001" name="Proc. Natl. Acad. Sci. U.S.A.">
        <title>Crystal structure of the precursor of galactose oxidase: an unusual self-processing enzyme.</title>
        <authorList>
            <person name="Firbank S.J."/>
            <person name="Rogers M.S."/>
            <person name="Wilmot C.M."/>
            <person name="Dooley D.M."/>
            <person name="Halcrow M.A."/>
            <person name="Knowles P.F."/>
            <person name="McPherson M.J."/>
            <person name="Phillips S.E."/>
        </authorList>
    </citation>
    <scope>X-RAY CRYSTALLOGRAPHY (1.4 ANGSTROMS) OF 25-680</scope>
</reference>
<reference key="17">
    <citation type="journal article" date="2004" name="Protein Eng. Des. Sel.">
        <title>Structural and kinetic studies of a series of mutants of galactose oxidase identified by directed evolution.</title>
        <authorList>
            <person name="Wilkinson D."/>
            <person name="Akumanyi N."/>
            <person name="Hurtado-Guerrero R."/>
            <person name="Dawkes H."/>
            <person name="Knowles P.F."/>
            <person name="Phillips S.E.V."/>
            <person name="McPherson M.J."/>
        </authorList>
    </citation>
    <scope>X-RAY CRYSTALLOGRAPHY (2.3 ANGSTROMS) OF 42-680 OF MUTANT SER-424 IN COMPLEX WITH COPPER IONS</scope>
    <scope>MASS SPECTROMETRY</scope>
    <scope>MUTAGENESIS OF CYS-424; TYR-477 AND VAL-535</scope>
    <scope>BIOPHYSICOCHEMICAL PROPERTIES</scope>
    <source>
        <strain>ATCC 46032 / CBS 110244 / NRRL 2903</strain>
    </source>
</reference>
<reference key="18">
    <citation type="journal article" date="2007" name="Biochemistry">
        <title>The stacking tryptophan of galactose oxidase: a second-coordination sphere residue that has profound effects on tyrosyl radical behavior and enzyme catalysis.</title>
        <authorList>
            <person name="Rogers M.S."/>
            <person name="Tyler E.M."/>
            <person name="Akyumani N."/>
            <person name="Kurtis C.R."/>
            <person name="Spooner R.K."/>
            <person name="Deacon S.E."/>
            <person name="Tamber S."/>
            <person name="Firbank S.J."/>
            <person name="Mahmoud K."/>
            <person name="Knowles P.F."/>
            <person name="Phillips S.E.V."/>
            <person name="McPherson M.J."/>
            <person name="Dooley D.M."/>
        </authorList>
    </citation>
    <scope>X-RAY CRYSTALLOGRAPHY (2.2 ANGSTROMS) OF 42-680 OF MUTANTS GLY-331; HIS-331 AND PHE-331 IN COMPLEX WITH COPPER IONS</scope>
    <scope>BIOPHYSICOCHEMICAL PROPERTIES</scope>
</reference>
<proteinExistence type="evidence at protein level"/>
<protein>
    <recommendedName>
        <fullName>Galactose oxidase</fullName>
        <shortName>GAO</shortName>
        <shortName>GO</shortName>
        <shortName>GOase</shortName>
        <ecNumber>1.1.3.9</ecNumber>
    </recommendedName>
</protein>
<gene>
    <name type="primary">GAOA</name>
</gene>
<keyword id="KW-0002">3D-structure</keyword>
<keyword id="KW-0186">Copper</keyword>
<keyword id="KW-0903">Direct protein sequencing</keyword>
<keyword id="KW-1015">Disulfide bond</keyword>
<keyword id="KW-0880">Kelch repeat</keyword>
<keyword id="KW-0479">Metal-binding</keyword>
<keyword id="KW-0560">Oxidoreductase</keyword>
<keyword id="KW-0677">Repeat</keyword>
<keyword id="KW-0964">Secreted</keyword>
<keyword id="KW-0732">Signal</keyword>
<keyword id="KW-0883">Thioether bond</keyword>
<sequence>MKHLLTLALCFSSINAVAVTVPHKAVGTGIPEGSLQFLSLRASAPIGSAISRNNWAVTCDSAQSGNECNKAIDGNKDTFWHTFYGANGDPKPPHTYTIDMKTTQNVNGLSMLPRQDGNQNGWIGRHEVYLSSDGTNWGSPVASGSWFADSTTKYSNFETRPARYVRLVAITEANGQPWTSIAEINVFQASSYTAPQPGLGRWGPTIDLPIVPAAAAIEPTSGRVLMWSSYRNDAFGGSPGGITLTSSWDPSTGIVSDRTVTVTKHDMFCPGISMDGNGQIVVTGGNDAKKTSLYDSSSDSWIPGPDMQVARGYQSSATMSDGRVFTIGGSWSGGVFEKNGEVYSPSSKTWTSLPNAKVNPMLTADKQGLYRSDNHAWLFGWKKGSVFQAGPSTAMNWYYTSGSGDVKSAGKRQSNRGVAPDAMCGNAVMYDAVKGKILTFGGSPDYQDSDATTNAHIITLGEPGTSPNTVFASNGLYFARTFHTSVVLPDGSTFITGGQRRGIPFEDSTPVFTPEIYVPEQDTFYKQNPNSIVRVYHSISLLLPDGRVFNGGGGLCGDCTTNHFDAQIFTPNYLYNSNGNLATRPKITRTSTQSVKVGGRITISTDSSISKASLIRYGTATHTVNTDQRRIPLTLTNNGGNSYSFQVPSDSGVALPGYWMLFVMNSAGVPSVASTIRVTQ</sequence>